<keyword id="KW-0131">Cell cycle</keyword>
<keyword id="KW-0132">Cell division</keyword>
<keyword id="KW-0963">Cytoplasm</keyword>
<keyword id="KW-0238">DNA-binding</keyword>
<keyword id="KW-1185">Reference proteome</keyword>
<keyword id="KW-0717">Septation</keyword>
<organism>
    <name type="scientific">Bacillus anthracis</name>
    <dbReference type="NCBI Taxonomy" id="1392"/>
    <lineage>
        <taxon>Bacteria</taxon>
        <taxon>Bacillati</taxon>
        <taxon>Bacillota</taxon>
        <taxon>Bacilli</taxon>
        <taxon>Bacillales</taxon>
        <taxon>Bacillaceae</taxon>
        <taxon>Bacillus</taxon>
        <taxon>Bacillus cereus group</taxon>
    </lineage>
</organism>
<feature type="chain" id="PRO_0000346617" description="Nucleoid occlusion protein">
    <location>
        <begin position="1"/>
        <end position="290"/>
    </location>
</feature>
<feature type="DNA-binding region" description="H-T-H motif" evidence="1">
    <location>
        <begin position="153"/>
        <end position="172"/>
    </location>
</feature>
<comment type="function">
    <text evidence="1">Effects nucleoid occlusion by binding relatively nonspecifically to DNA and preventing the assembly of the division machinery in the vicinity of the nucleoid, especially under conditions that disturb the cell cycle. It helps to coordinate cell division and chromosome segregation by preventing the formation of the Z ring through the nucleoid, which would cause chromosome breakage.</text>
</comment>
<comment type="subcellular location">
    <subcellularLocation>
        <location evidence="1">Cytoplasm</location>
        <location evidence="1">Nucleoid</location>
    </subcellularLocation>
</comment>
<comment type="similarity">
    <text evidence="1">Belongs to the ParB family.</text>
</comment>
<gene>
    <name evidence="1" type="primary">noc</name>
    <name type="ordered locus">BA_5731</name>
    <name type="ordered locus">GBAA_5731</name>
    <name type="ordered locus">BAS5334</name>
</gene>
<protein>
    <recommendedName>
        <fullName evidence="1">Nucleoid occlusion protein</fullName>
        <shortName evidence="1">Noc</shortName>
    </recommendedName>
</protein>
<reference key="1">
    <citation type="journal article" date="2003" name="Nature">
        <title>The genome sequence of Bacillus anthracis Ames and comparison to closely related bacteria.</title>
        <authorList>
            <person name="Read T.D."/>
            <person name="Peterson S.N."/>
            <person name="Tourasse N.J."/>
            <person name="Baillie L.W."/>
            <person name="Paulsen I.T."/>
            <person name="Nelson K.E."/>
            <person name="Tettelin H."/>
            <person name="Fouts D.E."/>
            <person name="Eisen J.A."/>
            <person name="Gill S.R."/>
            <person name="Holtzapple E.K."/>
            <person name="Okstad O.A."/>
            <person name="Helgason E."/>
            <person name="Rilstone J."/>
            <person name="Wu M."/>
            <person name="Kolonay J.F."/>
            <person name="Beanan M.J."/>
            <person name="Dodson R.J."/>
            <person name="Brinkac L.M."/>
            <person name="Gwinn M.L."/>
            <person name="DeBoy R.T."/>
            <person name="Madpu R."/>
            <person name="Daugherty S.C."/>
            <person name="Durkin A.S."/>
            <person name="Haft D.H."/>
            <person name="Nelson W.C."/>
            <person name="Peterson J.D."/>
            <person name="Pop M."/>
            <person name="Khouri H.M."/>
            <person name="Radune D."/>
            <person name="Benton J.L."/>
            <person name="Mahamoud Y."/>
            <person name="Jiang L."/>
            <person name="Hance I.R."/>
            <person name="Weidman J.F."/>
            <person name="Berry K.J."/>
            <person name="Plaut R.D."/>
            <person name="Wolf A.M."/>
            <person name="Watkins K.L."/>
            <person name="Nierman W.C."/>
            <person name="Hazen A."/>
            <person name="Cline R.T."/>
            <person name="Redmond C."/>
            <person name="Thwaite J.E."/>
            <person name="White O."/>
            <person name="Salzberg S.L."/>
            <person name="Thomason B."/>
            <person name="Friedlander A.M."/>
            <person name="Koehler T.M."/>
            <person name="Hanna P.C."/>
            <person name="Kolstoe A.-B."/>
            <person name="Fraser C.M."/>
        </authorList>
    </citation>
    <scope>NUCLEOTIDE SEQUENCE [LARGE SCALE GENOMIC DNA]</scope>
    <source>
        <strain>Ames / isolate Porton</strain>
    </source>
</reference>
<reference key="2">
    <citation type="submission" date="2004-01" db="EMBL/GenBank/DDBJ databases">
        <title>Complete genome sequence of Bacillus anthracis Sterne.</title>
        <authorList>
            <person name="Brettin T.S."/>
            <person name="Bruce D."/>
            <person name="Challacombe J.F."/>
            <person name="Gilna P."/>
            <person name="Han C."/>
            <person name="Hill K."/>
            <person name="Hitchcock P."/>
            <person name="Jackson P."/>
            <person name="Keim P."/>
            <person name="Longmire J."/>
            <person name="Lucas S."/>
            <person name="Okinaka R."/>
            <person name="Richardson P."/>
            <person name="Rubin E."/>
            <person name="Tice H."/>
        </authorList>
    </citation>
    <scope>NUCLEOTIDE SEQUENCE [LARGE SCALE GENOMIC DNA]</scope>
    <source>
        <strain>Sterne</strain>
    </source>
</reference>
<reference key="3">
    <citation type="journal article" date="2009" name="J. Bacteriol.">
        <title>The complete genome sequence of Bacillus anthracis Ames 'Ancestor'.</title>
        <authorList>
            <person name="Ravel J."/>
            <person name="Jiang L."/>
            <person name="Stanley S.T."/>
            <person name="Wilson M.R."/>
            <person name="Decker R.S."/>
            <person name="Read T.D."/>
            <person name="Worsham P."/>
            <person name="Keim P.S."/>
            <person name="Salzberg S.L."/>
            <person name="Fraser-Liggett C.M."/>
            <person name="Rasko D.A."/>
        </authorList>
    </citation>
    <scope>NUCLEOTIDE SEQUENCE [LARGE SCALE GENOMIC DNA]</scope>
    <source>
        <strain>Ames ancestor</strain>
    </source>
</reference>
<dbReference type="EMBL" id="AE016879">
    <property type="protein sequence ID" value="AAP29362.1"/>
    <property type="molecule type" value="Genomic_DNA"/>
</dbReference>
<dbReference type="EMBL" id="AE017334">
    <property type="protein sequence ID" value="AAT34891.1"/>
    <property type="molecule type" value="Genomic_DNA"/>
</dbReference>
<dbReference type="EMBL" id="AE017225">
    <property type="protein sequence ID" value="AAT57621.1"/>
    <property type="molecule type" value="Genomic_DNA"/>
</dbReference>
<dbReference type="RefSeq" id="NP_847876.1">
    <property type="nucleotide sequence ID" value="NC_003997.3"/>
</dbReference>
<dbReference type="RefSeq" id="WP_000799028.1">
    <property type="nucleotide sequence ID" value="NZ_WXXJ01000028.1"/>
</dbReference>
<dbReference type="RefSeq" id="YP_031571.1">
    <property type="nucleotide sequence ID" value="NC_005945.1"/>
</dbReference>
<dbReference type="SMR" id="Q81JH5"/>
<dbReference type="STRING" id="261594.GBAA_5731"/>
<dbReference type="DNASU" id="1085499"/>
<dbReference type="GeneID" id="45025309"/>
<dbReference type="KEGG" id="ban:BA_5731"/>
<dbReference type="KEGG" id="bar:GBAA_5731"/>
<dbReference type="KEGG" id="bat:BAS5334"/>
<dbReference type="PATRIC" id="fig|198094.11.peg.5692"/>
<dbReference type="eggNOG" id="COG1475">
    <property type="taxonomic scope" value="Bacteria"/>
</dbReference>
<dbReference type="HOGENOM" id="CLU_023853_0_1_9"/>
<dbReference type="OMA" id="YQFTIRI"/>
<dbReference type="OrthoDB" id="9802051at2"/>
<dbReference type="Proteomes" id="UP000000427">
    <property type="component" value="Chromosome"/>
</dbReference>
<dbReference type="Proteomes" id="UP000000594">
    <property type="component" value="Chromosome"/>
</dbReference>
<dbReference type="GO" id="GO:0005694">
    <property type="term" value="C:chromosome"/>
    <property type="evidence" value="ECO:0007669"/>
    <property type="project" value="TreeGrafter"/>
</dbReference>
<dbReference type="GO" id="GO:0005737">
    <property type="term" value="C:cytoplasm"/>
    <property type="evidence" value="ECO:0007669"/>
    <property type="project" value="UniProtKB-UniRule"/>
</dbReference>
<dbReference type="GO" id="GO:0009295">
    <property type="term" value="C:nucleoid"/>
    <property type="evidence" value="ECO:0007669"/>
    <property type="project" value="UniProtKB-SubCell"/>
</dbReference>
<dbReference type="GO" id="GO:0003677">
    <property type="term" value="F:DNA binding"/>
    <property type="evidence" value="ECO:0007669"/>
    <property type="project" value="UniProtKB-UniRule"/>
</dbReference>
<dbReference type="GO" id="GO:0007059">
    <property type="term" value="P:chromosome segregation"/>
    <property type="evidence" value="ECO:0007669"/>
    <property type="project" value="TreeGrafter"/>
</dbReference>
<dbReference type="GO" id="GO:0000917">
    <property type="term" value="P:division septum assembly"/>
    <property type="evidence" value="ECO:0007669"/>
    <property type="project" value="UniProtKB-KW"/>
</dbReference>
<dbReference type="GO" id="GO:0045881">
    <property type="term" value="P:positive regulation of sporulation resulting in formation of a cellular spore"/>
    <property type="evidence" value="ECO:0007669"/>
    <property type="project" value="TreeGrafter"/>
</dbReference>
<dbReference type="CDD" id="cd16393">
    <property type="entry name" value="SPO0J_N"/>
    <property type="match status" value="1"/>
</dbReference>
<dbReference type="FunFam" id="1.10.10.2830:FF:000001">
    <property type="entry name" value="Chromosome partitioning protein ParB"/>
    <property type="match status" value="1"/>
</dbReference>
<dbReference type="FunFam" id="3.90.1530.30:FF:000001">
    <property type="entry name" value="Chromosome partitioning protein ParB"/>
    <property type="match status" value="1"/>
</dbReference>
<dbReference type="Gene3D" id="1.10.10.2830">
    <property type="match status" value="1"/>
</dbReference>
<dbReference type="Gene3D" id="3.90.1530.30">
    <property type="match status" value="1"/>
</dbReference>
<dbReference type="HAMAP" id="MF_02015">
    <property type="entry name" value="ParB_Noc"/>
    <property type="match status" value="1"/>
</dbReference>
<dbReference type="InterPro" id="IPR050336">
    <property type="entry name" value="Chromosome_partition/occlusion"/>
</dbReference>
<dbReference type="InterPro" id="IPR041468">
    <property type="entry name" value="HTH_ParB/Spo0J"/>
</dbReference>
<dbReference type="InterPro" id="IPR023705">
    <property type="entry name" value="Nucleoid_occlusion_protein"/>
</dbReference>
<dbReference type="InterPro" id="IPR004437">
    <property type="entry name" value="ParB/RepB/Spo0J"/>
</dbReference>
<dbReference type="InterPro" id="IPR003115">
    <property type="entry name" value="ParB/Sulfiredoxin_dom"/>
</dbReference>
<dbReference type="InterPro" id="IPR036086">
    <property type="entry name" value="ParB/Sulfiredoxin_sf"/>
</dbReference>
<dbReference type="NCBIfam" id="TIGR04285">
    <property type="entry name" value="nucleoid_noc"/>
    <property type="match status" value="1"/>
</dbReference>
<dbReference type="NCBIfam" id="TIGR00180">
    <property type="entry name" value="parB_part"/>
    <property type="match status" value="1"/>
</dbReference>
<dbReference type="PANTHER" id="PTHR33375">
    <property type="entry name" value="CHROMOSOME-PARTITIONING PROTEIN PARB-RELATED"/>
    <property type="match status" value="1"/>
</dbReference>
<dbReference type="PANTHER" id="PTHR33375:SF8">
    <property type="entry name" value="NUCLEOID OCCLUSION PROTEIN"/>
    <property type="match status" value="1"/>
</dbReference>
<dbReference type="Pfam" id="PF17762">
    <property type="entry name" value="HTH_ParB"/>
    <property type="match status" value="1"/>
</dbReference>
<dbReference type="Pfam" id="PF02195">
    <property type="entry name" value="ParBc"/>
    <property type="match status" value="1"/>
</dbReference>
<dbReference type="SMART" id="SM00470">
    <property type="entry name" value="ParB"/>
    <property type="match status" value="1"/>
</dbReference>
<dbReference type="SUPFAM" id="SSF110849">
    <property type="entry name" value="ParB/Sulfiredoxin"/>
    <property type="match status" value="1"/>
</dbReference>
<evidence type="ECO:0000255" key="1">
    <source>
        <dbReference type="HAMAP-Rule" id="MF_02015"/>
    </source>
</evidence>
<accession>Q81JH5</accession>
<accession>Q6HQ17</accession>
<accession>Q6KJG1</accession>
<proteinExistence type="inferred from homology"/>
<sequence>MKNTFSRLFGFGDKESEFELQDESHEEIDKKVYEEIQEIPIVNITPNRYQPRTVFDDARIEELALTIRTHGLIQPIVVRQYEDDKYEIIAGERRFRAATKLGWEKVPAIIKNLNDTETASVALIENLQREELTAIEEAVAYQKLIELHNLTQEALAQRLGKGQSTIANKLRLLKLPEEIKSALLEKSITERHARALIPLKNEELQLKVLQEIVEKQLNVKQTEERITKLLEEAKPKRKAKQKAVSRDTRIAMNTIRQSLQMVADSGLNVNSEEEEFDEYYQITIQIPKKK</sequence>
<name>NOC_BACAN</name>